<evidence type="ECO:0000250" key="1"/>
<evidence type="ECO:0000255" key="2"/>
<evidence type="ECO:0000256" key="3">
    <source>
        <dbReference type="SAM" id="MobiDB-lite"/>
    </source>
</evidence>
<evidence type="ECO:0000305" key="4"/>
<protein>
    <recommendedName>
        <fullName>rRNA biogenesis protein rrp36</fullName>
    </recommendedName>
    <alternativeName>
        <fullName>Ribosomal RNA-processing protein 36</fullName>
    </alternativeName>
</protein>
<name>RRP36_ASPFN</name>
<dbReference type="EMBL" id="EQ963477">
    <property type="protein sequence ID" value="EED51280.1"/>
    <property type="molecule type" value="Genomic_DNA"/>
</dbReference>
<dbReference type="RefSeq" id="XP_002378287.1">
    <property type="nucleotide sequence ID" value="XM_002378246.1"/>
</dbReference>
<dbReference type="SMR" id="B8NDQ2"/>
<dbReference type="STRING" id="332952.B8NDQ2"/>
<dbReference type="EnsemblFungi" id="EED51280">
    <property type="protein sequence ID" value="EED51280"/>
    <property type="gene ID" value="AFLA_055430"/>
</dbReference>
<dbReference type="VEuPathDB" id="FungiDB:AFLA_004577"/>
<dbReference type="eggNOG" id="KOG3190">
    <property type="taxonomic scope" value="Eukaryota"/>
</dbReference>
<dbReference type="HOGENOM" id="CLU_048802_0_0_1"/>
<dbReference type="OMA" id="ERKEMPW"/>
<dbReference type="GO" id="GO:0030686">
    <property type="term" value="C:90S preribosome"/>
    <property type="evidence" value="ECO:0007669"/>
    <property type="project" value="TreeGrafter"/>
</dbReference>
<dbReference type="GO" id="GO:0005730">
    <property type="term" value="C:nucleolus"/>
    <property type="evidence" value="ECO:0007669"/>
    <property type="project" value="UniProtKB-SubCell"/>
</dbReference>
<dbReference type="GO" id="GO:0000462">
    <property type="term" value="P:maturation of SSU-rRNA from tricistronic rRNA transcript (SSU-rRNA, 5.8S rRNA, LSU-rRNA)"/>
    <property type="evidence" value="ECO:0007669"/>
    <property type="project" value="TreeGrafter"/>
</dbReference>
<dbReference type="InterPro" id="IPR009292">
    <property type="entry name" value="RRP36"/>
</dbReference>
<dbReference type="PANTHER" id="PTHR21738">
    <property type="entry name" value="RIBOSOMAL RNA PROCESSING PROTEIN 36 HOMOLOG"/>
    <property type="match status" value="1"/>
</dbReference>
<dbReference type="PANTHER" id="PTHR21738:SF0">
    <property type="entry name" value="RIBOSOMAL RNA PROCESSING PROTEIN 36 HOMOLOG"/>
    <property type="match status" value="1"/>
</dbReference>
<dbReference type="Pfam" id="PF06102">
    <property type="entry name" value="RRP36"/>
    <property type="match status" value="1"/>
</dbReference>
<reference key="1">
    <citation type="journal article" date="2015" name="Genome Announc.">
        <title>Genome sequence of Aspergillus flavus NRRL 3357, a strain that causes aflatoxin contamination of food and feed.</title>
        <authorList>
            <person name="Nierman W.C."/>
            <person name="Yu J."/>
            <person name="Fedorova-Abrams N.D."/>
            <person name="Losada L."/>
            <person name="Cleveland T.E."/>
            <person name="Bhatnagar D."/>
            <person name="Bennett J.W."/>
            <person name="Dean R."/>
            <person name="Payne G.A."/>
        </authorList>
    </citation>
    <scope>NUCLEOTIDE SEQUENCE [LARGE SCALE GENOMIC DNA]</scope>
    <source>
        <strain>ATCC 200026 / FGSC A1120 / IAM 13836 / NRRL 3357 / JCM 12722 / SRRC 167</strain>
    </source>
</reference>
<gene>
    <name type="primary">rrp36</name>
    <name type="ORF">AFLA_055430</name>
</gene>
<sequence>MAISDLLNRRVRALPEEDEEIYSEESAFEEKSDDRRSGESDSDSDDLDDEALEETDDNSEHDGPVGLEDDEDSEDGEDNDNGEDDVQASLSSISFGALAKAQASLGPKGKRNAKTAKPTEESPQTTSPLDDIRARIREAREQKRQESGKSKDSAKPARTSKHAPMVQSSKRAVSRKRTVVEPPSVPKSRDPRFDPTVLSHGGRHNAESARKAYSFLDDYRSSELKELKAKFAKTKNAEEKEALKREIRSTSDRLRAMENRRREEEVLAEHKKREKQLIREGKKSNPYFLKKSDLKKQVMLKKYENMNSKERTKALERRRKKIASKERKEMPMERRLGSEGNDDGGRKRRRMA</sequence>
<comment type="function">
    <text evidence="1">Component of the 90S pre-ribosome involved in the maturation of rRNAs. Required for early cleavages of the pre-RNAs in the 40S ribosomal subunit maturation pathway (By similarity).</text>
</comment>
<comment type="subunit">
    <text evidence="1">Associates with 90S and pre-40S pre-ribosomal particles.</text>
</comment>
<comment type="subcellular location">
    <subcellularLocation>
        <location evidence="1">Nucleus</location>
        <location evidence="1">Nucleolus</location>
    </subcellularLocation>
</comment>
<comment type="similarity">
    <text evidence="4">Belongs to the RRP36 family.</text>
</comment>
<accession>B8NDQ2</accession>
<organism>
    <name type="scientific">Aspergillus flavus (strain ATCC 200026 / FGSC A1120 / IAM 13836 / NRRL 3357 / JCM 12722 / SRRC 167)</name>
    <dbReference type="NCBI Taxonomy" id="332952"/>
    <lineage>
        <taxon>Eukaryota</taxon>
        <taxon>Fungi</taxon>
        <taxon>Dikarya</taxon>
        <taxon>Ascomycota</taxon>
        <taxon>Pezizomycotina</taxon>
        <taxon>Eurotiomycetes</taxon>
        <taxon>Eurotiomycetidae</taxon>
        <taxon>Eurotiales</taxon>
        <taxon>Aspergillaceae</taxon>
        <taxon>Aspergillus</taxon>
        <taxon>Aspergillus subgen. Circumdati</taxon>
    </lineage>
</organism>
<proteinExistence type="inferred from homology"/>
<feature type="chain" id="PRO_0000397615" description="rRNA biogenesis protein rrp36">
    <location>
        <begin position="1"/>
        <end position="352"/>
    </location>
</feature>
<feature type="region of interest" description="Disordered" evidence="3">
    <location>
        <begin position="1"/>
        <end position="207"/>
    </location>
</feature>
<feature type="region of interest" description="Disordered" evidence="3">
    <location>
        <begin position="304"/>
        <end position="352"/>
    </location>
</feature>
<feature type="coiled-coil region" evidence="2">
    <location>
        <begin position="221"/>
        <end position="280"/>
    </location>
</feature>
<feature type="compositionally biased region" description="Acidic residues" evidence="3">
    <location>
        <begin position="16"/>
        <end position="27"/>
    </location>
</feature>
<feature type="compositionally biased region" description="Basic and acidic residues" evidence="3">
    <location>
        <begin position="28"/>
        <end position="39"/>
    </location>
</feature>
<feature type="compositionally biased region" description="Acidic residues" evidence="3">
    <location>
        <begin position="40"/>
        <end position="57"/>
    </location>
</feature>
<feature type="compositionally biased region" description="Acidic residues" evidence="3">
    <location>
        <begin position="67"/>
        <end position="86"/>
    </location>
</feature>
<feature type="compositionally biased region" description="Basic and acidic residues" evidence="3">
    <location>
        <begin position="130"/>
        <end position="155"/>
    </location>
</feature>
<feature type="compositionally biased region" description="Basic and acidic residues" evidence="3">
    <location>
        <begin position="304"/>
        <end position="315"/>
    </location>
</feature>
<feature type="compositionally biased region" description="Basic and acidic residues" evidence="3">
    <location>
        <begin position="323"/>
        <end position="337"/>
    </location>
</feature>
<keyword id="KW-0175">Coiled coil</keyword>
<keyword id="KW-0539">Nucleus</keyword>
<keyword id="KW-0687">Ribonucleoprotein</keyword>
<keyword id="KW-0690">Ribosome biogenesis</keyword>
<keyword id="KW-0698">rRNA processing</keyword>